<keyword id="KW-0687">Ribonucleoprotein</keyword>
<keyword id="KW-0689">Ribosomal protein</keyword>
<reference key="1">
    <citation type="journal article" date="2005" name="DNA Res.">
        <title>Complete genome sequence of the facultative anaerobic magnetotactic bacterium Magnetospirillum sp. strain AMB-1.</title>
        <authorList>
            <person name="Matsunaga T."/>
            <person name="Okamura Y."/>
            <person name="Fukuda Y."/>
            <person name="Wahyudi A.T."/>
            <person name="Murase Y."/>
            <person name="Takeyama H."/>
        </authorList>
    </citation>
    <scope>NUCLEOTIDE SEQUENCE [LARGE SCALE GENOMIC DNA]</scope>
    <source>
        <strain>ATCC 700264 / AMB-1</strain>
    </source>
</reference>
<proteinExistence type="inferred from homology"/>
<accession>Q2VYY7</accession>
<name>RL35_PARM1</name>
<evidence type="ECO:0000255" key="1">
    <source>
        <dbReference type="HAMAP-Rule" id="MF_00514"/>
    </source>
</evidence>
<evidence type="ECO:0000305" key="2"/>
<organism>
    <name type="scientific">Paramagnetospirillum magneticum (strain ATCC 700264 / AMB-1)</name>
    <name type="common">Magnetospirillum magneticum</name>
    <dbReference type="NCBI Taxonomy" id="342108"/>
    <lineage>
        <taxon>Bacteria</taxon>
        <taxon>Pseudomonadati</taxon>
        <taxon>Pseudomonadota</taxon>
        <taxon>Alphaproteobacteria</taxon>
        <taxon>Rhodospirillales</taxon>
        <taxon>Magnetospirillaceae</taxon>
        <taxon>Paramagnetospirillum</taxon>
    </lineage>
</organism>
<sequence length="67" mass="7570">MPKMKTKSSAKKRFKLTGTGKVKGNVAFKRHCLSAKSQKMKRQARGTFMLFKTDSDNVKKYFLPNGG</sequence>
<gene>
    <name evidence="1" type="primary">rpmI</name>
    <name type="ordered locus">amb4384</name>
</gene>
<comment type="similarity">
    <text evidence="1">Belongs to the bacterial ribosomal protein bL35 family.</text>
</comment>
<protein>
    <recommendedName>
        <fullName evidence="1">Large ribosomal subunit protein bL35</fullName>
    </recommendedName>
    <alternativeName>
        <fullName evidence="2">50S ribosomal protein L35</fullName>
    </alternativeName>
</protein>
<feature type="chain" id="PRO_0000258698" description="Large ribosomal subunit protein bL35">
    <location>
        <begin position="1"/>
        <end position="67"/>
    </location>
</feature>
<dbReference type="EMBL" id="AP007255">
    <property type="protein sequence ID" value="BAE53188.1"/>
    <property type="molecule type" value="Genomic_DNA"/>
</dbReference>
<dbReference type="RefSeq" id="WP_009869561.1">
    <property type="nucleotide sequence ID" value="NC_007626.1"/>
</dbReference>
<dbReference type="SMR" id="Q2VYY7"/>
<dbReference type="STRING" id="342108.amb4384"/>
<dbReference type="KEGG" id="mag:amb4384"/>
<dbReference type="HOGENOM" id="CLU_169643_2_1_5"/>
<dbReference type="OrthoDB" id="9804851at2"/>
<dbReference type="Proteomes" id="UP000007058">
    <property type="component" value="Chromosome"/>
</dbReference>
<dbReference type="GO" id="GO:0022625">
    <property type="term" value="C:cytosolic large ribosomal subunit"/>
    <property type="evidence" value="ECO:0007669"/>
    <property type="project" value="TreeGrafter"/>
</dbReference>
<dbReference type="GO" id="GO:0003735">
    <property type="term" value="F:structural constituent of ribosome"/>
    <property type="evidence" value="ECO:0007669"/>
    <property type="project" value="InterPro"/>
</dbReference>
<dbReference type="GO" id="GO:0006412">
    <property type="term" value="P:translation"/>
    <property type="evidence" value="ECO:0007669"/>
    <property type="project" value="UniProtKB-UniRule"/>
</dbReference>
<dbReference type="FunFam" id="4.10.410.60:FF:000001">
    <property type="entry name" value="50S ribosomal protein L35"/>
    <property type="match status" value="1"/>
</dbReference>
<dbReference type="Gene3D" id="4.10.410.60">
    <property type="match status" value="1"/>
</dbReference>
<dbReference type="HAMAP" id="MF_00514">
    <property type="entry name" value="Ribosomal_bL35"/>
    <property type="match status" value="1"/>
</dbReference>
<dbReference type="InterPro" id="IPR001706">
    <property type="entry name" value="Ribosomal_bL35"/>
</dbReference>
<dbReference type="InterPro" id="IPR021137">
    <property type="entry name" value="Ribosomal_bL35-like"/>
</dbReference>
<dbReference type="InterPro" id="IPR018265">
    <property type="entry name" value="Ribosomal_bL35_CS"/>
</dbReference>
<dbReference type="InterPro" id="IPR037229">
    <property type="entry name" value="Ribosomal_bL35_sf"/>
</dbReference>
<dbReference type="NCBIfam" id="TIGR00001">
    <property type="entry name" value="rpmI_bact"/>
    <property type="match status" value="1"/>
</dbReference>
<dbReference type="PANTHER" id="PTHR33343">
    <property type="entry name" value="54S RIBOSOMAL PROTEIN BL35M"/>
    <property type="match status" value="1"/>
</dbReference>
<dbReference type="PANTHER" id="PTHR33343:SF1">
    <property type="entry name" value="LARGE RIBOSOMAL SUBUNIT PROTEIN BL35M"/>
    <property type="match status" value="1"/>
</dbReference>
<dbReference type="Pfam" id="PF01632">
    <property type="entry name" value="Ribosomal_L35p"/>
    <property type="match status" value="1"/>
</dbReference>
<dbReference type="PRINTS" id="PR00064">
    <property type="entry name" value="RIBOSOMALL35"/>
</dbReference>
<dbReference type="SUPFAM" id="SSF143034">
    <property type="entry name" value="L35p-like"/>
    <property type="match status" value="1"/>
</dbReference>
<dbReference type="PROSITE" id="PS00936">
    <property type="entry name" value="RIBOSOMAL_L35"/>
    <property type="match status" value="1"/>
</dbReference>